<dbReference type="EMBL" id="CP000437">
    <property type="protein sequence ID" value="ABI82441.1"/>
    <property type="molecule type" value="Genomic_DNA"/>
</dbReference>
<dbReference type="SMR" id="Q0BN93"/>
<dbReference type="KEGG" id="fth:FTH_0453"/>
<dbReference type="GO" id="GO:1990904">
    <property type="term" value="C:ribonucleoprotein complex"/>
    <property type="evidence" value="ECO:0007669"/>
    <property type="project" value="UniProtKB-KW"/>
</dbReference>
<dbReference type="GO" id="GO:0005840">
    <property type="term" value="C:ribosome"/>
    <property type="evidence" value="ECO:0007669"/>
    <property type="project" value="UniProtKB-KW"/>
</dbReference>
<dbReference type="GO" id="GO:0003735">
    <property type="term" value="F:structural constituent of ribosome"/>
    <property type="evidence" value="ECO:0007669"/>
    <property type="project" value="InterPro"/>
</dbReference>
<dbReference type="GO" id="GO:0006412">
    <property type="term" value="P:translation"/>
    <property type="evidence" value="ECO:0007669"/>
    <property type="project" value="UniProtKB-UniRule"/>
</dbReference>
<dbReference type="Gene3D" id="1.20.5.1150">
    <property type="entry name" value="Ribosomal protein S8"/>
    <property type="match status" value="1"/>
</dbReference>
<dbReference type="HAMAP" id="MF_00358">
    <property type="entry name" value="Ribosomal_bS21"/>
    <property type="match status" value="1"/>
</dbReference>
<dbReference type="InterPro" id="IPR001911">
    <property type="entry name" value="Ribosomal_bS21"/>
</dbReference>
<dbReference type="InterPro" id="IPR038380">
    <property type="entry name" value="Ribosomal_bS21_sf"/>
</dbReference>
<dbReference type="NCBIfam" id="TIGR00030">
    <property type="entry name" value="S21p"/>
    <property type="match status" value="1"/>
</dbReference>
<dbReference type="Pfam" id="PF01165">
    <property type="entry name" value="Ribosomal_S21"/>
    <property type="match status" value="1"/>
</dbReference>
<dbReference type="PRINTS" id="PR00976">
    <property type="entry name" value="RIBOSOMALS21"/>
</dbReference>
<comment type="similarity">
    <text evidence="1">Belongs to the bacterial ribosomal protein bS21 family.</text>
</comment>
<keyword id="KW-0687">Ribonucleoprotein</keyword>
<keyword id="KW-0689">Ribosomal protein</keyword>
<protein>
    <recommendedName>
        <fullName evidence="1">Small ribosomal subunit protein bS21A</fullName>
    </recommendedName>
    <alternativeName>
        <fullName evidence="2">30S ribosomal protein S21 1</fullName>
    </alternativeName>
</protein>
<proteinExistence type="inferred from homology"/>
<accession>Q0BN93</accession>
<sequence length="65" mass="7847">MLSIRVDEHKPFDISLRNFKRACEKAGIKQELRDRQHYVKPTEKRKIAKRQAVKRARISQRRAFI</sequence>
<name>RS211_FRATO</name>
<gene>
    <name evidence="1" type="primary">rpsU1</name>
    <name type="ordered locus">FTH_0453</name>
</gene>
<organism>
    <name type="scientific">Francisella tularensis subsp. holarctica (strain OSU18)</name>
    <dbReference type="NCBI Taxonomy" id="393011"/>
    <lineage>
        <taxon>Bacteria</taxon>
        <taxon>Pseudomonadati</taxon>
        <taxon>Pseudomonadota</taxon>
        <taxon>Gammaproteobacteria</taxon>
        <taxon>Thiotrichales</taxon>
        <taxon>Francisellaceae</taxon>
        <taxon>Francisella</taxon>
    </lineage>
</organism>
<evidence type="ECO:0000255" key="1">
    <source>
        <dbReference type="HAMAP-Rule" id="MF_00358"/>
    </source>
</evidence>
<evidence type="ECO:0000305" key="2"/>
<reference key="1">
    <citation type="journal article" date="2006" name="J. Bacteriol.">
        <title>Chromosome rearrangement and diversification of Francisella tularensis revealed by the type B (OSU18) genome sequence.</title>
        <authorList>
            <person name="Petrosino J.F."/>
            <person name="Xiang Q."/>
            <person name="Karpathy S.E."/>
            <person name="Jiang H."/>
            <person name="Yerrapragada S."/>
            <person name="Liu Y."/>
            <person name="Gioia J."/>
            <person name="Hemphill L."/>
            <person name="Gonzalez A."/>
            <person name="Raghavan T.M."/>
            <person name="Uzman A."/>
            <person name="Fox G.E."/>
            <person name="Highlander S."/>
            <person name="Reichard M."/>
            <person name="Morton R.J."/>
            <person name="Clinkenbeard K.D."/>
            <person name="Weinstock G.M."/>
        </authorList>
    </citation>
    <scope>NUCLEOTIDE SEQUENCE [LARGE SCALE GENOMIC DNA]</scope>
    <source>
        <strain>OSU18</strain>
    </source>
</reference>
<feature type="chain" id="PRO_0000266671" description="Small ribosomal subunit protein bS21A">
    <location>
        <begin position="1"/>
        <end position="65"/>
    </location>
</feature>